<reference key="1">
    <citation type="journal article" date="2004" name="Biochem. J.">
        <title>Murine cystathionine gamma-lyase: complete cDNA and genomic sequences, promoter activity, tissue distribution and developmental expression.</title>
        <authorList>
            <person name="Ishii I."/>
            <person name="Akahoshi N."/>
            <person name="Yu X.-N."/>
            <person name="Kobayashi Y."/>
            <person name="Namekata K."/>
            <person name="Komaki G."/>
            <person name="Kimura H."/>
        </authorList>
    </citation>
    <scope>NUCLEOTIDE SEQUENCE [GENOMIC DNA / MRNA]</scope>
    <scope>TISSUE SPECIFICITY</scope>
    <source>
        <strain>129/SvJ</strain>
        <strain>C57BL/6J</strain>
        <tissue>Kidney</tissue>
        <tissue>Spleen</tissue>
    </source>
</reference>
<reference key="2">
    <citation type="submission" date="2005-09" db="EMBL/GenBank/DDBJ databases">
        <authorList>
            <person name="Mural R.J."/>
            <person name="Adams M.D."/>
            <person name="Myers E.W."/>
            <person name="Smith H.O."/>
            <person name="Venter J.C."/>
        </authorList>
    </citation>
    <scope>NUCLEOTIDE SEQUENCE [LARGE SCALE GENOMIC DNA]</scope>
</reference>
<reference key="3">
    <citation type="journal article" date="2004" name="Genome Res.">
        <title>The status, quality, and expansion of the NIH full-length cDNA project: the Mammalian Gene Collection (MGC).</title>
        <authorList>
            <consortium name="The MGC Project Team"/>
        </authorList>
    </citation>
    <scope>NUCLEOTIDE SEQUENCE [LARGE SCALE MRNA]</scope>
    <source>
        <tissue>Kidney</tissue>
    </source>
</reference>
<reference key="4">
    <citation type="journal article" date="2008" name="Science">
        <title>H2S as a physiologic vasorelaxant: hypertension in mice with deletion of cystathionine gamma-lyase.</title>
        <authorList>
            <person name="Yang G."/>
            <person name="Wu L."/>
            <person name="Jiang B."/>
            <person name="Yang W."/>
            <person name="Qi J."/>
            <person name="Cao K."/>
            <person name="Meng Q."/>
            <person name="Mustafa A.K."/>
            <person name="Mu W."/>
            <person name="Zhang S."/>
            <person name="Snyder S.H."/>
            <person name="Wang R."/>
        </authorList>
    </citation>
    <scope>DISRUPTION PHENOTYPE</scope>
    <scope>FUNCTION</scope>
    <scope>INTERACTION WITH CALM</scope>
    <scope>ACTIVITY REGULATION</scope>
</reference>
<reference key="5">
    <citation type="journal article" date="2009" name="Sci. Signal.">
        <title>H2S signals through protein S-sulfhydration.</title>
        <authorList>
            <person name="Mustafa A.K."/>
            <person name="Gadalla M.M."/>
            <person name="Sen N."/>
            <person name="Kim S."/>
            <person name="Mu W."/>
            <person name="Gazi S.K."/>
            <person name="Barrow R.K."/>
            <person name="Yang G."/>
            <person name="Wang R."/>
            <person name="Snyder S.H."/>
        </authorList>
    </citation>
    <scope>FUNCTION AS CYSTEINE-PROTEIN SULFHYDRASE</scope>
    <scope>CATALYTIC ACTIVITY</scope>
    <scope>DISRUPTION PHENOTYPE</scope>
</reference>
<reference key="6">
    <citation type="journal article" date="2010" name="FASEB J.">
        <title>Regulation of homocysteine metabolism and methylation in human and mouse tissues.</title>
        <authorList>
            <person name="Chen N.C."/>
            <person name="Yang F."/>
            <person name="Capecci L.M."/>
            <person name="Gu Z."/>
            <person name="Schafer A.I."/>
            <person name="Durante W."/>
            <person name="Yang X.F."/>
            <person name="Wang H."/>
        </authorList>
    </citation>
    <scope>TISSUE SPECIFICITY</scope>
</reference>
<reference key="7">
    <citation type="journal article" date="2010" name="Cell">
        <title>A tissue-specific atlas of mouse protein phosphorylation and expression.</title>
        <authorList>
            <person name="Huttlin E.L."/>
            <person name="Jedrychowski M.P."/>
            <person name="Elias J.E."/>
            <person name="Goswami T."/>
            <person name="Rad R."/>
            <person name="Beausoleil S.A."/>
            <person name="Villen J."/>
            <person name="Haas W."/>
            <person name="Sowa M.E."/>
            <person name="Gygi S.P."/>
        </authorList>
    </citation>
    <scope>IDENTIFICATION BY MASS SPECTROMETRY [LARGE SCALE ANALYSIS]</scope>
    <source>
        <tissue>Kidney</tissue>
        <tissue>Liver</tissue>
        <tissue>Pancreas</tissue>
    </source>
</reference>
<reference key="8">
    <citation type="journal article" date="2012" name="Mol. Cell">
        <title>Hydrogen sulfide-linked sulfhydration of NF-kappaB mediates its antiapoptotic actions.</title>
        <authorList>
            <person name="Sen N."/>
            <person name="Paul B.D."/>
            <person name="Gadalla M.M."/>
            <person name="Mustafa A.K."/>
            <person name="Sen T."/>
            <person name="Xu R."/>
            <person name="Kim S."/>
            <person name="Snyder S.H."/>
        </authorList>
    </citation>
    <scope>FUNCTION AS CYSTEINE-PROTEIN SULFHYDRASE</scope>
    <scope>INDUCTION BY SP1 TRANSCRIPTION FACTOR</scope>
</reference>
<reference key="9">
    <citation type="journal article" date="2021" name="FASEB J.">
        <title>Cystathionine gamma-lyase/H2 S signaling facilitates myogenesis under aging and injury condition.</title>
        <authorList>
            <person name="Zhang Y."/>
            <person name="Masters L."/>
            <person name="Wang Y."/>
            <person name="Wu L."/>
            <person name="Pei Y."/>
            <person name="Guo B."/>
            <person name="Parissenti A."/>
            <person name="Lees S.J."/>
            <person name="Wang R."/>
            <person name="Yang G."/>
        </authorList>
    </citation>
    <scope>FUNCTION</scope>
    <scope>DISRUPTION PHENOTYPE</scope>
    <scope>DEVELOPMENTAL STAGE</scope>
</reference>
<keyword id="KW-0028">Amino-acid biosynthesis</keyword>
<keyword id="KW-0112">Calmodulin-binding</keyword>
<keyword id="KW-0198">Cysteine biosynthesis</keyword>
<keyword id="KW-0963">Cytoplasm</keyword>
<keyword id="KW-0443">Lipid metabolism</keyword>
<keyword id="KW-0456">Lyase</keyword>
<keyword id="KW-0663">Pyridoxal phosphate</keyword>
<keyword id="KW-1185">Reference proteome</keyword>
<name>CGL_MOUSE</name>
<gene>
    <name type="primary">Cth</name>
</gene>
<sequence length="398" mass="43567">MQKDASLSGFLPSFQHFATQAIHVGQEPEQWNSRAVVLPISLATTFKQDFPGQSSGFEYSRSGNPTRNCLEKAVAALDGAKHSLAFASGLAATITITHLLKAGDEIICMDEVYGGTNRYFRRVASEFGLKISFVDCSKTKLLEAAITPQTKLVWIETPTNPTLKLADIGACAQIVHKRGDIILVVDNTFMSAYFQRPLALGADICMCSATKYMNGHSDVVMGLVSVNSDDLNSRLRFLQNSLGAVPSPFDCYLCCRGLKTLQVRMEKHFKNGMAVARFLETNPRVEKVVYPGLPSHPQHELAKRQCSGCPGMVSFYIKGALQHAKAFLKNLKLFTLAESLGGYESLAELPAIMTHASVPEKDRATLGINDTLIRLSVGLEDEQDLLEDLDRALKAAHP</sequence>
<comment type="function">
    <text evidence="2 3 5 6 8 9">Catalyzes the last step in the trans-sulfuration pathway from L-methionine to L-cysteine in a pyridoxal-5'-phosphate (PLP)-dependent manner, which consists on cleaving the L,L-cystathionine molecule into L-cysteine, ammonia and 2-oxobutanoate. Part of the L-cysteine derived from the trans-sulfuration pathway is utilized for biosynthesis of the ubiquitous antioxidant glutathione. Besides its role in the conversion of L-cystathionine into L-cysteine, it utilizes L-cysteine and L-homocysteine as substrates (at much lower rates than L,L-cystathionine) to produce hydrogen sulfide (H2S). In vitro, it converts two L-cysteine molecules into lanthionine and H2S, and two L-homocysteine molecules to homolanthionine and H2S, which can be particularly relevant under conditions of severe hyperhomocysteinemia. Lanthionine and homolanthionine are structural homologs of L,L-cystathionine that differ by the absence or presence of an extra methylene group, respectively (By similarity). Acts as a cysteine-protein sulfhydrase by mediating sulfhydration of target proteins: sulfhydration consists of converting -SH groups into -SSH on specific cysteine residues of target proteins such as GAPDH, PTPN1 and NF-kappa-B subunit RELA, thereby regulating their function (PubMed:19903941, PubMed:22244329). By generating the gasotransmitter H2S, it participates in a number of physiological processes such as vasodilation, bone protection, and inflammation (By similarity) (PubMed:18948540). Plays an essential role in myogenesis by contributing to the biogenesis of H2S in skeletal muscle tissue (PubMed:33826201). Can also accept homoserine as substrate (By similarity). Catalyzes the elimination of selenocystathionine (which can be derived from the diet) to yield selenocysteine, ammonia and 2-oxobutanoate (By similarity).</text>
</comment>
<comment type="catalytic activity">
    <reaction evidence="3">
        <text>L,L-cystathionine + H2O = 2-oxobutanoate + L-cysteine + NH4(+)</text>
        <dbReference type="Rhea" id="RHEA:14005"/>
        <dbReference type="ChEBI" id="CHEBI:15377"/>
        <dbReference type="ChEBI" id="CHEBI:16763"/>
        <dbReference type="ChEBI" id="CHEBI:28938"/>
        <dbReference type="ChEBI" id="CHEBI:35235"/>
        <dbReference type="ChEBI" id="CHEBI:58161"/>
        <dbReference type="EC" id="4.4.1.1"/>
    </reaction>
    <physiologicalReaction direction="left-to-right" evidence="3">
        <dbReference type="Rhea" id="RHEA:14006"/>
    </physiologicalReaction>
</comment>
<comment type="catalytic activity">
    <reaction evidence="15">
        <text>L-cysteine + H2O = hydrogen sulfide + pyruvate + NH4(+) + H(+)</text>
        <dbReference type="Rhea" id="RHEA:24931"/>
        <dbReference type="ChEBI" id="CHEBI:15361"/>
        <dbReference type="ChEBI" id="CHEBI:15377"/>
        <dbReference type="ChEBI" id="CHEBI:15378"/>
        <dbReference type="ChEBI" id="CHEBI:28938"/>
        <dbReference type="ChEBI" id="CHEBI:29919"/>
        <dbReference type="ChEBI" id="CHEBI:35235"/>
        <dbReference type="EC" id="4.4.1.1"/>
    </reaction>
    <physiologicalReaction direction="left-to-right" evidence="15">
        <dbReference type="Rhea" id="RHEA:24932"/>
    </physiologicalReaction>
</comment>
<comment type="catalytic activity">
    <reaction evidence="3">
        <text>L-homocysteine + H2O = 2-oxobutanoate + hydrogen sulfide + NH4(+) + H(+)</text>
        <dbReference type="Rhea" id="RHEA:14501"/>
        <dbReference type="ChEBI" id="CHEBI:15377"/>
        <dbReference type="ChEBI" id="CHEBI:15378"/>
        <dbReference type="ChEBI" id="CHEBI:16763"/>
        <dbReference type="ChEBI" id="CHEBI:28938"/>
        <dbReference type="ChEBI" id="CHEBI:29919"/>
        <dbReference type="ChEBI" id="CHEBI:58199"/>
        <dbReference type="EC" id="4.4.1.2"/>
    </reaction>
    <physiologicalReaction direction="left-to-right" evidence="3">
        <dbReference type="Rhea" id="RHEA:14502"/>
    </physiologicalReaction>
</comment>
<comment type="catalytic activity">
    <reaction evidence="2">
        <text>L-homoserine = 2-oxobutanoate + NH4(+)</text>
        <dbReference type="Rhea" id="RHEA:24923"/>
        <dbReference type="ChEBI" id="CHEBI:16763"/>
        <dbReference type="ChEBI" id="CHEBI:28938"/>
        <dbReference type="ChEBI" id="CHEBI:57476"/>
        <dbReference type="EC" id="4.4.1.1"/>
    </reaction>
    <physiologicalReaction direction="left-to-right" evidence="2">
        <dbReference type="Rhea" id="RHEA:24924"/>
    </physiologicalReaction>
</comment>
<comment type="catalytic activity">
    <reaction evidence="2">
        <text>L-selenocystathionine + H2O = L-selenocysteine + 2-oxobutanoate + NH4(+)</text>
        <dbReference type="Rhea" id="RHEA:31151"/>
        <dbReference type="ChEBI" id="CHEBI:15377"/>
        <dbReference type="ChEBI" id="CHEBI:16763"/>
        <dbReference type="ChEBI" id="CHEBI:28938"/>
        <dbReference type="ChEBI" id="CHEBI:57843"/>
        <dbReference type="ChEBI" id="CHEBI:62226"/>
    </reaction>
    <physiologicalReaction direction="left-to-right" evidence="2">
        <dbReference type="Rhea" id="RHEA:31152"/>
    </physiologicalReaction>
</comment>
<comment type="cofactor">
    <cofactor evidence="3">
        <name>pyridoxal 5'-phosphate</name>
        <dbReference type="ChEBI" id="CHEBI:597326"/>
    </cofactor>
</comment>
<comment type="activity regulation">
    <text evidence="5">Activated by calmodulin in the presence of calcium ions.</text>
</comment>
<comment type="pathway">
    <text evidence="3">Amino-acid biosynthesis; L-cysteine biosynthesis; L-cysteine from L-homocysteine and L-serine: step 2/2.</text>
</comment>
<comment type="subunit">
    <text evidence="3 5">Homotetramer (By similarity). Interacts with CALM in a calcium-dependent manner (PubMed:18948540).</text>
</comment>
<comment type="subcellular location">
    <subcellularLocation>
        <location evidence="1">Cytoplasm</location>
    </subcellularLocation>
</comment>
<comment type="tissue specificity">
    <text evidence="4 7">Detected in liver and kidney, and at lower levels in small intestine (at protein level) (PubMed:15038791). Highly expressed in liver, kidney and lung, detected at lower levels in stomach, small intestine and adipose tissue, and hardly found in heart, bone, and thymus (PubMed:15038791, PubMed:20305127).</text>
</comment>
<comment type="developmental stage">
    <text evidence="9">First detected at low levels in embryonic liver after 12.5 days of embryonic development. Highly expressed in liver and kidney after 18.5 days of embryonic development. Expressed at high levels in liver and kidney after birth and in adults. Age-dependent expression in mouse skeletal muscles; protein expression in skeletal muscles increased 5 days after birth, and remained stable until 10 weeks, then slightly decreased at 26 weeks and was significantly lower at 51 weeks (PubMed:33826201).</text>
</comment>
<comment type="induction">
    <text evidence="8">Tumor necrosis factor alpha (TNF-alpha) promotes the binding of SP1 to the CSE promoter, inducing its transcription.</text>
</comment>
<comment type="disruption phenotype">
    <text evidence="5 6 9">No visible phenotype at birth. Mice exhibit strongly decreased levels of hydrogen sulfide (H2S) in heart and aorta. Mice also show absence of protein sulfhydration on target proteins. Hydrogen sulfide serum levels are also lower than normal. No effect on brain hydrogen sulfide levels. Age-dependent hypertension beginning at about seven weeks of age (PubMed:18948540, PubMed:19903941). Deteriorated the loss of skeletal muscle mass in aging mice (PubMed:33826201).</text>
</comment>
<comment type="similarity">
    <text evidence="14">Belongs to the trans-sulfuration enzymes family.</text>
</comment>
<feature type="chain" id="PRO_0000114751" description="Cystathionine gamma-lyase">
    <location>
        <begin position="1"/>
        <end position="398"/>
    </location>
</feature>
<feature type="binding site" evidence="1">
    <location>
        <position position="61"/>
    </location>
    <ligand>
        <name>substrate</name>
    </ligand>
</feature>
<feature type="binding site" evidence="1">
    <location>
        <position position="113"/>
    </location>
    <ligand>
        <name>substrate</name>
    </ligand>
</feature>
<feature type="binding site" evidence="1">
    <location>
        <position position="118"/>
    </location>
    <ligand>
        <name>substrate</name>
    </ligand>
</feature>
<feature type="binding site" evidence="1">
    <location>
        <position position="338"/>
    </location>
    <ligand>
        <name>substrate</name>
    </ligand>
</feature>
<feature type="modified residue" description="N6-(pyridoxal phosphate)lysine" evidence="3">
    <location>
        <position position="211"/>
    </location>
</feature>
<proteinExistence type="evidence at protein level"/>
<accession>Q8VCN5</accession>
<accession>Q6H324</accession>
<dbReference type="EC" id="4.4.1.1" evidence="15"/>
<dbReference type="EC" id="4.4.1.2" evidence="3"/>
<dbReference type="EMBL" id="AY083352">
    <property type="protein sequence ID" value="AAL99218.1"/>
    <property type="molecule type" value="mRNA"/>
</dbReference>
<dbReference type="EMBL" id="AY262829">
    <property type="protein sequence ID" value="AAP86975.1"/>
    <property type="molecule type" value="Genomic_DNA"/>
</dbReference>
<dbReference type="EMBL" id="CH466532">
    <property type="protein sequence ID" value="EDL11858.1"/>
    <property type="molecule type" value="Genomic_DNA"/>
</dbReference>
<dbReference type="EMBL" id="BC019483">
    <property type="protein sequence ID" value="AAH19483.1"/>
    <property type="molecule type" value="mRNA"/>
</dbReference>
<dbReference type="CCDS" id="CCDS51101.1"/>
<dbReference type="RefSeq" id="NP_666065.1">
    <property type="nucleotide sequence ID" value="NM_145953.2"/>
</dbReference>
<dbReference type="SMR" id="Q8VCN5"/>
<dbReference type="BioGRID" id="223644">
    <property type="interactions" value="4"/>
</dbReference>
<dbReference type="DIP" id="DIP-60018N"/>
<dbReference type="FunCoup" id="Q8VCN5">
    <property type="interactions" value="1166"/>
</dbReference>
<dbReference type="IntAct" id="Q8VCN5">
    <property type="interactions" value="1"/>
</dbReference>
<dbReference type="STRING" id="10090.ENSMUSP00000113672"/>
<dbReference type="BindingDB" id="Q8VCN5"/>
<dbReference type="ChEMBL" id="CHEMBL4680037"/>
<dbReference type="GlyGen" id="Q8VCN5">
    <property type="glycosylation" value="2 sites, 1 N-linked glycan (1 site), 1 O-linked glycan (1 site)"/>
</dbReference>
<dbReference type="iPTMnet" id="Q8VCN5"/>
<dbReference type="PhosphoSitePlus" id="Q8VCN5"/>
<dbReference type="SwissPalm" id="Q8VCN5"/>
<dbReference type="jPOST" id="Q8VCN5"/>
<dbReference type="PaxDb" id="10090-ENSMUSP00000113672"/>
<dbReference type="PeptideAtlas" id="Q8VCN5"/>
<dbReference type="ProteomicsDB" id="281657"/>
<dbReference type="Pumba" id="Q8VCN5"/>
<dbReference type="Antibodypedia" id="19668">
    <property type="antibodies" value="422 antibodies from 34 providers"/>
</dbReference>
<dbReference type="DNASU" id="107869"/>
<dbReference type="Ensembl" id="ENSMUST00000118539.2">
    <property type="protein sequence ID" value="ENSMUSP00000113672.2"/>
    <property type="gene ID" value="ENSMUSG00000028179.13"/>
</dbReference>
<dbReference type="GeneID" id="107869"/>
<dbReference type="KEGG" id="mmu:107869"/>
<dbReference type="UCSC" id="uc008rvj.1">
    <property type="organism name" value="mouse"/>
</dbReference>
<dbReference type="AGR" id="MGI:1339968"/>
<dbReference type="CTD" id="1491"/>
<dbReference type="MGI" id="MGI:1339968">
    <property type="gene designation" value="Cth"/>
</dbReference>
<dbReference type="VEuPathDB" id="HostDB:ENSMUSG00000028179"/>
<dbReference type="eggNOG" id="KOG0053">
    <property type="taxonomic scope" value="Eukaryota"/>
</dbReference>
<dbReference type="GeneTree" id="ENSGT00390000000312"/>
<dbReference type="HOGENOM" id="CLU_018986_2_3_1"/>
<dbReference type="InParanoid" id="Q8VCN5"/>
<dbReference type="OMA" id="YKQDGVG"/>
<dbReference type="OrthoDB" id="3512640at2759"/>
<dbReference type="PhylomeDB" id="Q8VCN5"/>
<dbReference type="TreeFam" id="TF300720"/>
<dbReference type="BRENDA" id="4.4.1.1">
    <property type="organism ID" value="3474"/>
</dbReference>
<dbReference type="Reactome" id="R-MMU-1614558">
    <property type="pathway name" value="Degradation of cysteine and homocysteine"/>
</dbReference>
<dbReference type="Reactome" id="R-MMU-1614603">
    <property type="pathway name" value="Cysteine formation from homocysteine"/>
</dbReference>
<dbReference type="SABIO-RK" id="Q8VCN5"/>
<dbReference type="UniPathway" id="UPA00136">
    <property type="reaction ID" value="UER00202"/>
</dbReference>
<dbReference type="BioGRID-ORCS" id="107869">
    <property type="hits" value="0 hits in 80 CRISPR screens"/>
</dbReference>
<dbReference type="ChiTaRS" id="Cth">
    <property type="organism name" value="mouse"/>
</dbReference>
<dbReference type="PRO" id="PR:Q8VCN5"/>
<dbReference type="Proteomes" id="UP000000589">
    <property type="component" value="Chromosome 3"/>
</dbReference>
<dbReference type="RNAct" id="Q8VCN5">
    <property type="molecule type" value="protein"/>
</dbReference>
<dbReference type="Bgee" id="ENSMUSG00000028179">
    <property type="expression patterns" value="Expressed in proximal tubule and 84 other cell types or tissues"/>
</dbReference>
<dbReference type="GO" id="GO:0005829">
    <property type="term" value="C:cytosol"/>
    <property type="evidence" value="ECO:0000304"/>
    <property type="project" value="Reactome"/>
</dbReference>
<dbReference type="GO" id="GO:0005516">
    <property type="term" value="F:calmodulin binding"/>
    <property type="evidence" value="ECO:0007669"/>
    <property type="project" value="UniProtKB-KW"/>
</dbReference>
<dbReference type="GO" id="GO:0004123">
    <property type="term" value="F:cystathionine gamma-lyase activity"/>
    <property type="evidence" value="ECO:0000314"/>
    <property type="project" value="MGI"/>
</dbReference>
<dbReference type="GO" id="GO:0047982">
    <property type="term" value="F:homocysteine desulfhydrase activity"/>
    <property type="evidence" value="ECO:0007669"/>
    <property type="project" value="RHEA"/>
</dbReference>
<dbReference type="GO" id="GO:0042802">
    <property type="term" value="F:identical protein binding"/>
    <property type="evidence" value="ECO:0007669"/>
    <property type="project" value="Ensembl"/>
</dbReference>
<dbReference type="GO" id="GO:0080146">
    <property type="term" value="F:L-cysteine desulfhydrase activity"/>
    <property type="evidence" value="ECO:0007669"/>
    <property type="project" value="RHEA"/>
</dbReference>
<dbReference type="GO" id="GO:0044540">
    <property type="term" value="F:L-cystine L-cysteine-lyase (deaminating)"/>
    <property type="evidence" value="ECO:0000314"/>
    <property type="project" value="UniProtKB"/>
</dbReference>
<dbReference type="GO" id="GO:0030170">
    <property type="term" value="F:pyridoxal phosphate binding"/>
    <property type="evidence" value="ECO:0000250"/>
    <property type="project" value="UniProtKB"/>
</dbReference>
<dbReference type="GO" id="GO:0098606">
    <property type="term" value="F:selenocystathionine gamma-lyase activity"/>
    <property type="evidence" value="ECO:0007669"/>
    <property type="project" value="RHEA"/>
</dbReference>
<dbReference type="GO" id="GO:1990830">
    <property type="term" value="P:cellular response to leukemia inhibitory factor"/>
    <property type="evidence" value="ECO:0000270"/>
    <property type="project" value="MGI"/>
</dbReference>
<dbReference type="GO" id="GO:0019344">
    <property type="term" value="P:cysteine biosynthetic process"/>
    <property type="evidence" value="ECO:0000250"/>
    <property type="project" value="UniProtKB"/>
</dbReference>
<dbReference type="GO" id="GO:0019343">
    <property type="term" value="P:cysteine biosynthetic process via cystathionine"/>
    <property type="evidence" value="ECO:0007669"/>
    <property type="project" value="Ensembl"/>
</dbReference>
<dbReference type="GO" id="GO:0070814">
    <property type="term" value="P:hydrogen sulfide biosynthetic process"/>
    <property type="evidence" value="ECO:0000250"/>
    <property type="project" value="UniProtKB"/>
</dbReference>
<dbReference type="GO" id="GO:0006629">
    <property type="term" value="P:lipid metabolic process"/>
    <property type="evidence" value="ECO:0007669"/>
    <property type="project" value="UniProtKB-KW"/>
</dbReference>
<dbReference type="GO" id="GO:0043066">
    <property type="term" value="P:negative regulation of apoptotic process"/>
    <property type="evidence" value="ECO:0000315"/>
    <property type="project" value="UniProtKB"/>
</dbReference>
<dbReference type="GO" id="GO:2001234">
    <property type="term" value="P:negative regulation of apoptotic signaling pathway"/>
    <property type="evidence" value="ECO:0000315"/>
    <property type="project" value="MGI"/>
</dbReference>
<dbReference type="GO" id="GO:1904831">
    <property type="term" value="P:positive regulation of aortic smooth muscle cell differentiation"/>
    <property type="evidence" value="ECO:0007669"/>
    <property type="project" value="Ensembl"/>
</dbReference>
<dbReference type="GO" id="GO:0043123">
    <property type="term" value="P:positive regulation of canonical NF-kappaB signal transduction"/>
    <property type="evidence" value="ECO:0000315"/>
    <property type="project" value="UniProtKB"/>
</dbReference>
<dbReference type="GO" id="GO:0051092">
    <property type="term" value="P:positive regulation of NF-kappaB transcription factor activity"/>
    <property type="evidence" value="ECO:0000315"/>
    <property type="project" value="UniProtKB"/>
</dbReference>
<dbReference type="GO" id="GO:0051289">
    <property type="term" value="P:protein homotetramerization"/>
    <property type="evidence" value="ECO:0007669"/>
    <property type="project" value="Ensembl"/>
</dbReference>
<dbReference type="GO" id="GO:0044524">
    <property type="term" value="P:protein sulfhydration"/>
    <property type="evidence" value="ECO:0000314"/>
    <property type="project" value="UniProtKB"/>
</dbReference>
<dbReference type="GO" id="GO:0018272">
    <property type="term" value="P:protein-pyridoxal-5-phosphate linkage via peptidyl-N6-pyridoxal phosphate-L-lysine"/>
    <property type="evidence" value="ECO:0000250"/>
    <property type="project" value="UniProtKB"/>
</dbReference>
<dbReference type="GO" id="GO:0019346">
    <property type="term" value="P:transsulfuration"/>
    <property type="evidence" value="ECO:0007669"/>
    <property type="project" value="Ensembl"/>
</dbReference>
<dbReference type="CDD" id="cd00614">
    <property type="entry name" value="CGS_like"/>
    <property type="match status" value="1"/>
</dbReference>
<dbReference type="FunFam" id="3.90.1150.10:FF:000008">
    <property type="entry name" value="Cystathionine gamma-synthase"/>
    <property type="match status" value="1"/>
</dbReference>
<dbReference type="FunFam" id="3.40.640.10:FF:000009">
    <property type="entry name" value="Cystathionine gamma-synthase homolog"/>
    <property type="match status" value="1"/>
</dbReference>
<dbReference type="Gene3D" id="3.90.1150.10">
    <property type="entry name" value="Aspartate Aminotransferase, domain 1"/>
    <property type="match status" value="1"/>
</dbReference>
<dbReference type="Gene3D" id="3.40.640.10">
    <property type="entry name" value="Type I PLP-dependent aspartate aminotransferase-like (Major domain)"/>
    <property type="match status" value="1"/>
</dbReference>
<dbReference type="InterPro" id="IPR000277">
    <property type="entry name" value="Cys/Met-Metab_PyrdxlP-dep_enz"/>
</dbReference>
<dbReference type="InterPro" id="IPR054542">
    <property type="entry name" value="Cys_met_metab_PP"/>
</dbReference>
<dbReference type="InterPro" id="IPR015424">
    <property type="entry name" value="PyrdxlP-dep_Trfase"/>
</dbReference>
<dbReference type="InterPro" id="IPR015421">
    <property type="entry name" value="PyrdxlP-dep_Trfase_major"/>
</dbReference>
<dbReference type="InterPro" id="IPR015422">
    <property type="entry name" value="PyrdxlP-dep_Trfase_small"/>
</dbReference>
<dbReference type="PANTHER" id="PTHR11808:SF15">
    <property type="entry name" value="CYSTATHIONINE GAMMA-LYASE"/>
    <property type="match status" value="1"/>
</dbReference>
<dbReference type="PANTHER" id="PTHR11808">
    <property type="entry name" value="TRANS-SULFURATION ENZYME FAMILY MEMBER"/>
    <property type="match status" value="1"/>
</dbReference>
<dbReference type="Pfam" id="PF01053">
    <property type="entry name" value="Cys_Met_Meta_PP"/>
    <property type="match status" value="1"/>
</dbReference>
<dbReference type="PIRSF" id="PIRSF001434">
    <property type="entry name" value="CGS"/>
    <property type="match status" value="1"/>
</dbReference>
<dbReference type="SUPFAM" id="SSF53383">
    <property type="entry name" value="PLP-dependent transferases"/>
    <property type="match status" value="1"/>
</dbReference>
<dbReference type="PROSITE" id="PS00868">
    <property type="entry name" value="CYS_MET_METAB_PP"/>
    <property type="match status" value="1"/>
</dbReference>
<organism>
    <name type="scientific">Mus musculus</name>
    <name type="common">Mouse</name>
    <dbReference type="NCBI Taxonomy" id="10090"/>
    <lineage>
        <taxon>Eukaryota</taxon>
        <taxon>Metazoa</taxon>
        <taxon>Chordata</taxon>
        <taxon>Craniata</taxon>
        <taxon>Vertebrata</taxon>
        <taxon>Euteleostomi</taxon>
        <taxon>Mammalia</taxon>
        <taxon>Eutheria</taxon>
        <taxon>Euarchontoglires</taxon>
        <taxon>Glires</taxon>
        <taxon>Rodentia</taxon>
        <taxon>Myomorpha</taxon>
        <taxon>Muroidea</taxon>
        <taxon>Muridae</taxon>
        <taxon>Murinae</taxon>
        <taxon>Mus</taxon>
        <taxon>Mus</taxon>
    </lineage>
</organism>
<evidence type="ECO:0000250" key="1"/>
<evidence type="ECO:0000250" key="2">
    <source>
        <dbReference type="UniProtKB" id="P18757"/>
    </source>
</evidence>
<evidence type="ECO:0000250" key="3">
    <source>
        <dbReference type="UniProtKB" id="P32929"/>
    </source>
</evidence>
<evidence type="ECO:0000269" key="4">
    <source>
    </source>
</evidence>
<evidence type="ECO:0000269" key="5">
    <source>
    </source>
</evidence>
<evidence type="ECO:0000269" key="6">
    <source>
    </source>
</evidence>
<evidence type="ECO:0000269" key="7">
    <source>
    </source>
</evidence>
<evidence type="ECO:0000269" key="8">
    <source>
    </source>
</evidence>
<evidence type="ECO:0000269" key="9">
    <source>
    </source>
</evidence>
<evidence type="ECO:0000303" key="10">
    <source>
    </source>
</evidence>
<evidence type="ECO:0000303" key="11">
    <source>
    </source>
</evidence>
<evidence type="ECO:0000303" key="12">
    <source>
    </source>
</evidence>
<evidence type="ECO:0000303" key="13">
    <source>
    </source>
</evidence>
<evidence type="ECO:0000305" key="14"/>
<evidence type="ECO:0000305" key="15">
    <source>
    </source>
</evidence>
<protein>
    <recommendedName>
        <fullName evidence="10 11 12 13">Cystathionine gamma-lyase</fullName>
        <shortName>CGL</shortName>
        <shortName evidence="10 11 12 13">CSE</shortName>
        <ecNumber evidence="15">4.4.1.1</ecNumber>
    </recommendedName>
    <alternativeName>
        <fullName>Cysteine desulfhydrase</fullName>
    </alternativeName>
    <alternativeName>
        <fullName>Cysteine-protein sulfhydrase</fullName>
    </alternativeName>
    <alternativeName>
        <fullName>Gamma-cystathionase</fullName>
    </alternativeName>
    <alternativeName>
        <fullName>Homocysteine desulfhydrase</fullName>
        <ecNumber evidence="3">4.4.1.2</ecNumber>
    </alternativeName>
</protein>